<feature type="chain" id="PRO_0000151944" description="ATP phosphoribosyltransferase">
    <location>
        <begin position="1"/>
        <end position="208"/>
    </location>
</feature>
<feature type="strand" evidence="3">
    <location>
        <begin position="3"/>
        <end position="7"/>
    </location>
</feature>
<feature type="helix" evidence="3">
    <location>
        <begin position="12"/>
        <end position="22"/>
    </location>
</feature>
<feature type="strand" evidence="3">
    <location>
        <begin position="26"/>
        <end position="29"/>
    </location>
</feature>
<feature type="strand" evidence="3">
    <location>
        <begin position="31"/>
        <end position="36"/>
    </location>
</feature>
<feature type="strand" evidence="3">
    <location>
        <begin position="39"/>
        <end position="44"/>
    </location>
</feature>
<feature type="helix" evidence="3">
    <location>
        <begin position="46"/>
        <end position="48"/>
    </location>
</feature>
<feature type="helix" evidence="3">
    <location>
        <begin position="49"/>
        <end position="54"/>
    </location>
</feature>
<feature type="strand" evidence="3">
    <location>
        <begin position="59"/>
        <end position="64"/>
    </location>
</feature>
<feature type="helix" evidence="3">
    <location>
        <begin position="65"/>
        <end position="70"/>
    </location>
</feature>
<feature type="strand" evidence="3">
    <location>
        <begin position="79"/>
        <end position="93"/>
    </location>
</feature>
<feature type="turn" evidence="3">
    <location>
        <begin position="94"/>
        <end position="96"/>
    </location>
</feature>
<feature type="strand" evidence="3">
    <location>
        <begin position="103"/>
        <end position="108"/>
    </location>
</feature>
<feature type="helix" evidence="3">
    <location>
        <begin position="110"/>
        <end position="119"/>
    </location>
</feature>
<feature type="strand" evidence="3">
    <location>
        <begin position="124"/>
        <end position="128"/>
    </location>
</feature>
<feature type="helix" evidence="3">
    <location>
        <begin position="135"/>
        <end position="138"/>
    </location>
</feature>
<feature type="strand" evidence="4">
    <location>
        <begin position="139"/>
        <end position="141"/>
    </location>
</feature>
<feature type="strand" evidence="3">
    <location>
        <begin position="143"/>
        <end position="152"/>
    </location>
</feature>
<feature type="helix" evidence="3">
    <location>
        <begin position="153"/>
        <end position="157"/>
    </location>
</feature>
<feature type="strand" evidence="3">
    <location>
        <begin position="160"/>
        <end position="175"/>
    </location>
</feature>
<feature type="helix" evidence="3">
    <location>
        <begin position="177"/>
        <end position="182"/>
    </location>
</feature>
<feature type="helix" evidence="3">
    <location>
        <begin position="184"/>
        <end position="203"/>
    </location>
</feature>
<name>HIS1_THEMA</name>
<evidence type="ECO:0000250" key="1"/>
<evidence type="ECO:0000305" key="2"/>
<evidence type="ECO:0007829" key="3">
    <source>
        <dbReference type="PDB" id="1O63"/>
    </source>
</evidence>
<evidence type="ECO:0007829" key="4">
    <source>
        <dbReference type="PDB" id="1USY"/>
    </source>
</evidence>
<keyword id="KW-0002">3D-structure</keyword>
<keyword id="KW-0028">Amino-acid biosynthesis</keyword>
<keyword id="KW-0067">ATP-binding</keyword>
<keyword id="KW-0963">Cytoplasm</keyword>
<keyword id="KW-0328">Glycosyltransferase</keyword>
<keyword id="KW-0368">Histidine biosynthesis</keyword>
<keyword id="KW-0547">Nucleotide-binding</keyword>
<keyword id="KW-1185">Reference proteome</keyword>
<keyword id="KW-0808">Transferase</keyword>
<comment type="function">
    <text evidence="1">Catalyzes the condensation of ATP and 5-phosphoribose 1-diphosphate to form N'-(5'-phosphoribosyl)-ATP (PR-ATP). Has a crucial role in the pathway because the rate of histidine biosynthesis seems to be controlled primarily by regulation of HisG enzymatic activity (By similarity).</text>
</comment>
<comment type="catalytic activity">
    <reaction>
        <text>1-(5-phospho-beta-D-ribosyl)-ATP + diphosphate = 5-phospho-alpha-D-ribose 1-diphosphate + ATP</text>
        <dbReference type="Rhea" id="RHEA:18473"/>
        <dbReference type="ChEBI" id="CHEBI:30616"/>
        <dbReference type="ChEBI" id="CHEBI:33019"/>
        <dbReference type="ChEBI" id="CHEBI:58017"/>
        <dbReference type="ChEBI" id="CHEBI:73183"/>
        <dbReference type="EC" id="2.4.2.17"/>
    </reaction>
</comment>
<comment type="pathway">
    <text>Amino-acid biosynthesis; L-histidine biosynthesis; L-histidine from 5-phospho-alpha-D-ribose 1-diphosphate: step 1/9.</text>
</comment>
<comment type="subunit">
    <text evidence="1">Heteromultimer composed of HisG and HisZ subunits.</text>
</comment>
<comment type="subcellular location">
    <subcellularLocation>
        <location evidence="1">Cytoplasm</location>
    </subcellularLocation>
</comment>
<comment type="domain">
    <text>Lacks the C-terminal regulatory region which is replaced by HisZ.</text>
</comment>
<comment type="similarity">
    <text evidence="2">Belongs to the ATP phosphoribosyltransferase family. Short subfamily.</text>
</comment>
<reference key="1">
    <citation type="journal article" date="1999" name="Nature">
        <title>Evidence for lateral gene transfer between Archaea and Bacteria from genome sequence of Thermotoga maritima.</title>
        <authorList>
            <person name="Nelson K.E."/>
            <person name="Clayton R.A."/>
            <person name="Gill S.R."/>
            <person name="Gwinn M.L."/>
            <person name="Dodson R.J."/>
            <person name="Haft D.H."/>
            <person name="Hickey E.K."/>
            <person name="Peterson J.D."/>
            <person name="Nelson W.C."/>
            <person name="Ketchum K.A."/>
            <person name="McDonald L.A."/>
            <person name="Utterback T.R."/>
            <person name="Malek J.A."/>
            <person name="Linher K.D."/>
            <person name="Garrett M.M."/>
            <person name="Stewart A.M."/>
            <person name="Cotton M.D."/>
            <person name="Pratt M.S."/>
            <person name="Phillips C.A."/>
            <person name="Richardson D.L."/>
            <person name="Heidelberg J.F."/>
            <person name="Sutton G.G."/>
            <person name="Fleischmann R.D."/>
            <person name="Eisen J.A."/>
            <person name="White O."/>
            <person name="Salzberg S.L."/>
            <person name="Smith H.O."/>
            <person name="Venter J.C."/>
            <person name="Fraser C.M."/>
        </authorList>
    </citation>
    <scope>NUCLEOTIDE SEQUENCE [LARGE SCALE GENOMIC DNA]</scope>
    <source>
        <strain>ATCC 43589 / DSM 3109 / JCM 10099 / NBRC 100826 / MSB8</strain>
    </source>
</reference>
<accession>Q9X0D2</accession>
<proteinExistence type="evidence at protein level"/>
<dbReference type="EC" id="2.4.2.17"/>
<dbReference type="EMBL" id="AE000512">
    <property type="protein sequence ID" value="AAD36119.1"/>
    <property type="molecule type" value="Genomic_DNA"/>
</dbReference>
<dbReference type="PIR" id="A72305">
    <property type="entry name" value="A72305"/>
</dbReference>
<dbReference type="RefSeq" id="NP_228848.1">
    <property type="nucleotide sequence ID" value="NC_000853.1"/>
</dbReference>
<dbReference type="RefSeq" id="WP_004080478.1">
    <property type="nucleotide sequence ID" value="NZ_CP011107.1"/>
</dbReference>
<dbReference type="PDB" id="1O63">
    <property type="method" value="X-ray"/>
    <property type="resolution" value="2.00 A"/>
    <property type="chains" value="A/B=2-208"/>
</dbReference>
<dbReference type="PDB" id="1O64">
    <property type="method" value="X-ray"/>
    <property type="resolution" value="2.10 A"/>
    <property type="chains" value="A/B=2-208"/>
</dbReference>
<dbReference type="PDB" id="1USY">
    <property type="method" value="X-ray"/>
    <property type="resolution" value="2.52 A"/>
    <property type="chains" value="E/F/G/H=1-208"/>
</dbReference>
<dbReference type="PDBsum" id="1O63"/>
<dbReference type="PDBsum" id="1O64"/>
<dbReference type="PDBsum" id="1USY"/>
<dbReference type="SMR" id="Q9X0D2"/>
<dbReference type="FunCoup" id="Q9X0D2">
    <property type="interactions" value="316"/>
</dbReference>
<dbReference type="STRING" id="243274.TM_1042"/>
<dbReference type="PaxDb" id="243274-THEMA_09150"/>
<dbReference type="EnsemblBacteria" id="AAD36119">
    <property type="protein sequence ID" value="AAD36119"/>
    <property type="gene ID" value="TM_1042"/>
</dbReference>
<dbReference type="KEGG" id="tma:TM1042"/>
<dbReference type="KEGG" id="tmi:THEMA_09150"/>
<dbReference type="KEGG" id="tmm:Tmari_1046"/>
<dbReference type="KEGG" id="tmw:THMA_1064"/>
<dbReference type="eggNOG" id="COG0040">
    <property type="taxonomic scope" value="Bacteria"/>
</dbReference>
<dbReference type="InParanoid" id="Q9X0D2"/>
<dbReference type="OrthoDB" id="9801867at2"/>
<dbReference type="UniPathway" id="UPA00031">
    <property type="reaction ID" value="UER00006"/>
</dbReference>
<dbReference type="EvolutionaryTrace" id="Q9X0D2"/>
<dbReference type="Proteomes" id="UP000008183">
    <property type="component" value="Chromosome"/>
</dbReference>
<dbReference type="GO" id="GO:0005737">
    <property type="term" value="C:cytoplasm"/>
    <property type="evidence" value="ECO:0007669"/>
    <property type="project" value="UniProtKB-SubCell"/>
</dbReference>
<dbReference type="GO" id="GO:0005524">
    <property type="term" value="F:ATP binding"/>
    <property type="evidence" value="ECO:0007669"/>
    <property type="project" value="UniProtKB-KW"/>
</dbReference>
<dbReference type="GO" id="GO:0003879">
    <property type="term" value="F:ATP phosphoribosyltransferase activity"/>
    <property type="evidence" value="ECO:0000318"/>
    <property type="project" value="GO_Central"/>
</dbReference>
<dbReference type="GO" id="GO:0000105">
    <property type="term" value="P:L-histidine biosynthetic process"/>
    <property type="evidence" value="ECO:0000318"/>
    <property type="project" value="GO_Central"/>
</dbReference>
<dbReference type="CDD" id="cd13595">
    <property type="entry name" value="PBP2_HisGs"/>
    <property type="match status" value="1"/>
</dbReference>
<dbReference type="FunFam" id="3.40.190.10:FF:000008">
    <property type="entry name" value="ATP phosphoribosyltransferase"/>
    <property type="match status" value="1"/>
</dbReference>
<dbReference type="Gene3D" id="3.40.190.10">
    <property type="entry name" value="Periplasmic binding protein-like II"/>
    <property type="match status" value="2"/>
</dbReference>
<dbReference type="HAMAP" id="MF_01018">
    <property type="entry name" value="HisG_Short"/>
    <property type="match status" value="1"/>
</dbReference>
<dbReference type="InterPro" id="IPR013820">
    <property type="entry name" value="ATP_PRibTrfase_cat"/>
</dbReference>
<dbReference type="InterPro" id="IPR018198">
    <property type="entry name" value="ATP_PRibTrfase_CS"/>
</dbReference>
<dbReference type="InterPro" id="IPR001348">
    <property type="entry name" value="ATP_PRibTrfase_HisG"/>
</dbReference>
<dbReference type="InterPro" id="IPR024893">
    <property type="entry name" value="ATP_PRibTrfase_HisG_short"/>
</dbReference>
<dbReference type="NCBIfam" id="TIGR00070">
    <property type="entry name" value="hisG"/>
    <property type="match status" value="1"/>
</dbReference>
<dbReference type="PANTHER" id="PTHR21403:SF8">
    <property type="entry name" value="ATP PHOSPHORIBOSYLTRANSFERASE"/>
    <property type="match status" value="1"/>
</dbReference>
<dbReference type="PANTHER" id="PTHR21403">
    <property type="entry name" value="ATP PHOSPHORIBOSYLTRANSFERASE ATP-PRTASE"/>
    <property type="match status" value="1"/>
</dbReference>
<dbReference type="Pfam" id="PF01634">
    <property type="entry name" value="HisG"/>
    <property type="match status" value="1"/>
</dbReference>
<dbReference type="SUPFAM" id="SSF53850">
    <property type="entry name" value="Periplasmic binding protein-like II"/>
    <property type="match status" value="1"/>
</dbReference>
<dbReference type="PROSITE" id="PS01316">
    <property type="entry name" value="ATP_P_PHORIBOSYLTR"/>
    <property type="match status" value="1"/>
</dbReference>
<organism>
    <name type="scientific">Thermotoga maritima (strain ATCC 43589 / DSM 3109 / JCM 10099 / NBRC 100826 / MSB8)</name>
    <dbReference type="NCBI Taxonomy" id="243274"/>
    <lineage>
        <taxon>Bacteria</taxon>
        <taxon>Thermotogati</taxon>
        <taxon>Thermotogota</taxon>
        <taxon>Thermotogae</taxon>
        <taxon>Thermotogales</taxon>
        <taxon>Thermotogaceae</taxon>
        <taxon>Thermotoga</taxon>
    </lineage>
</organism>
<sequence>MLKLAIPKGRLEEKVMTYLKKTGVIFERESSILREGKDIVCFMVRPFDVPTYLVHGVADIGFCGTDVLLEKETSLIQPFFIPTNISRMVLAGPKGRGIPEGEKRIATKFPNVTQRYCESKGWHCRIIPLKGSVELAPIAGLSDLIVDITETGRTLKENNLEILDEIFVIRTHVVVNPVSYRTKREEVVSFLEKLQEVIEHDSNEQSRG</sequence>
<gene>
    <name type="primary">hisG</name>
    <name type="ordered locus">TM_1042</name>
</gene>
<protein>
    <recommendedName>
        <fullName>ATP phosphoribosyltransferase</fullName>
        <shortName>ATP-PRT</shortName>
        <shortName>ATP-PRTase</shortName>
        <ecNumber>2.4.2.17</ecNumber>
    </recommendedName>
</protein>